<proteinExistence type="evidence at protein level"/>
<sequence>MADIEMSEASKTPVVAEEVVDPVQKANEASLLTFADLKKNIGLIDKGVDTKEMRFIISVLRQTQSIRKKLNYKVLNQIVNFAFSHQNHATKKNFLLSFLKSDGSSMDIDSTTQAEKETTPSSSSSHLNIEVESYIHLLVLIYLIDQKKYEDATKCSSALMETVQSNTRITLYPLSSKIFFYYSLSYEMTNNLHEVRSTLLSALRTATLRHNDEGQATIINLLLRNYLEYNLFEQADKLLANTQFPESASSNQFARYFYYQGRIRAIQLEYAESFKFLTQAIRKAPQNTAGGFRRTVYKLLSIVQLLMGEIPERNTFSQKQLKIALKPYFHLTEAVRVGDLGSFNQALEQNSDIFKSDQTFTLVQRLRSNVIKAGLKKLNTAYSRISFNDICTKLKFDGTTQDIMFIIAKTIKDGVIDATINYEGGYLQSRENIDAYSTQEPLHAFSNRIDICLKIHNDSLKAMRFHPDLNKAETEKIAEVAKTIKEEMERQAEESSDNEGDSDF</sequence>
<keyword id="KW-0647">Proteasome</keyword>
<keyword id="KW-1185">Reference proteome</keyword>
<dbReference type="EMBL" id="AAFI02000119">
    <property type="protein sequence ID" value="EAS66838.1"/>
    <property type="molecule type" value="Genomic_DNA"/>
</dbReference>
<dbReference type="RefSeq" id="XP_001134521.1">
    <property type="nucleotide sequence ID" value="XM_001134521.1"/>
</dbReference>
<dbReference type="SMR" id="Q1ZXD3"/>
<dbReference type="FunCoup" id="Q1ZXD3">
    <property type="interactions" value="939"/>
</dbReference>
<dbReference type="STRING" id="44689.Q1ZXD3"/>
<dbReference type="PaxDb" id="44689-DDB0232980"/>
<dbReference type="EnsemblProtists" id="EAS66838">
    <property type="protein sequence ID" value="EAS66838"/>
    <property type="gene ID" value="DDB_G0288621"/>
</dbReference>
<dbReference type="GeneID" id="8626718"/>
<dbReference type="KEGG" id="ddi:DDB_G0288621"/>
<dbReference type="dictyBase" id="DDB_G0288621">
    <property type="gene designation" value="psmD3"/>
</dbReference>
<dbReference type="VEuPathDB" id="AmoebaDB:DDB_G0288621"/>
<dbReference type="eggNOG" id="KOG2581">
    <property type="taxonomic scope" value="Eukaryota"/>
</dbReference>
<dbReference type="HOGENOM" id="CLU_019858_1_2_1"/>
<dbReference type="InParanoid" id="Q1ZXD3"/>
<dbReference type="OMA" id="AKVYFYF"/>
<dbReference type="PhylomeDB" id="Q1ZXD3"/>
<dbReference type="Reactome" id="R-DDI-1236978">
    <property type="pathway name" value="Cross-presentation of soluble exogenous antigens (endosomes)"/>
</dbReference>
<dbReference type="Reactome" id="R-DDI-174084">
    <property type="pathway name" value="Autodegradation of Cdh1 by Cdh1:APC/C"/>
</dbReference>
<dbReference type="Reactome" id="R-DDI-174154">
    <property type="pathway name" value="APC/C:Cdc20 mediated degradation of Securin"/>
</dbReference>
<dbReference type="Reactome" id="R-DDI-174178">
    <property type="pathway name" value="APC/C:Cdh1 mediated degradation of Cdc20 and other APC/C:Cdh1 targeted proteins in late mitosis/early G1"/>
</dbReference>
<dbReference type="Reactome" id="R-DDI-2467813">
    <property type="pathway name" value="Separation of Sister Chromatids"/>
</dbReference>
<dbReference type="Reactome" id="R-DDI-349425">
    <property type="pathway name" value="Autodegradation of the E3 ubiquitin ligase COP1"/>
</dbReference>
<dbReference type="Reactome" id="R-DDI-382556">
    <property type="pathway name" value="ABC-family proteins mediated transport"/>
</dbReference>
<dbReference type="Reactome" id="R-DDI-450408">
    <property type="pathway name" value="AUF1 (hnRNP D0) binds and destabilizes mRNA"/>
</dbReference>
<dbReference type="Reactome" id="R-DDI-4641258">
    <property type="pathway name" value="Degradation of DVL"/>
</dbReference>
<dbReference type="Reactome" id="R-DDI-5632684">
    <property type="pathway name" value="Hedgehog 'on' state"/>
</dbReference>
<dbReference type="Reactome" id="R-DDI-5658442">
    <property type="pathway name" value="Regulation of RAS by GAPs"/>
</dbReference>
<dbReference type="Reactome" id="R-DDI-5687128">
    <property type="pathway name" value="MAPK6/MAPK4 signaling"/>
</dbReference>
<dbReference type="Reactome" id="R-DDI-5689603">
    <property type="pathway name" value="UCH proteinases"/>
</dbReference>
<dbReference type="Reactome" id="R-DDI-5689880">
    <property type="pathway name" value="Ub-specific processing proteases"/>
</dbReference>
<dbReference type="Reactome" id="R-DDI-6798695">
    <property type="pathway name" value="Neutrophil degranulation"/>
</dbReference>
<dbReference type="Reactome" id="R-DDI-68949">
    <property type="pathway name" value="Orc1 removal from chromatin"/>
</dbReference>
<dbReference type="Reactome" id="R-DDI-69017">
    <property type="pathway name" value="CDK-mediated phosphorylation and removal of Cdc6"/>
</dbReference>
<dbReference type="Reactome" id="R-DDI-69601">
    <property type="pathway name" value="Ubiquitin Mediated Degradation of Phosphorylated Cdc25A"/>
</dbReference>
<dbReference type="Reactome" id="R-DDI-8854050">
    <property type="pathway name" value="FBXL7 down-regulates AURKA during mitotic entry and in early mitosis"/>
</dbReference>
<dbReference type="Reactome" id="R-DDI-8948751">
    <property type="pathway name" value="Regulation of PTEN stability and activity"/>
</dbReference>
<dbReference type="Reactome" id="R-DDI-8951664">
    <property type="pathway name" value="Neddylation"/>
</dbReference>
<dbReference type="Reactome" id="R-DDI-9755511">
    <property type="pathway name" value="KEAP1-NFE2L2 pathway"/>
</dbReference>
<dbReference type="Reactome" id="R-DDI-983168">
    <property type="pathway name" value="Antigen processing: Ubiquitination &amp; Proteasome degradation"/>
</dbReference>
<dbReference type="Reactome" id="R-DDI-9907900">
    <property type="pathway name" value="Proteasome assembly"/>
</dbReference>
<dbReference type="PRO" id="PR:Q1ZXD3"/>
<dbReference type="Proteomes" id="UP000002195">
    <property type="component" value="Chromosome 5"/>
</dbReference>
<dbReference type="GO" id="GO:0000502">
    <property type="term" value="C:proteasome complex"/>
    <property type="evidence" value="ECO:0000250"/>
    <property type="project" value="dictyBase"/>
</dbReference>
<dbReference type="GO" id="GO:0008541">
    <property type="term" value="C:proteasome regulatory particle, lid subcomplex"/>
    <property type="evidence" value="ECO:0000318"/>
    <property type="project" value="GO_Central"/>
</dbReference>
<dbReference type="GO" id="GO:0030234">
    <property type="term" value="F:enzyme regulator activity"/>
    <property type="evidence" value="ECO:0007669"/>
    <property type="project" value="InterPro"/>
</dbReference>
<dbReference type="GO" id="GO:0042176">
    <property type="term" value="P:regulation of protein catabolic process"/>
    <property type="evidence" value="ECO:0007669"/>
    <property type="project" value="InterPro"/>
</dbReference>
<dbReference type="GO" id="GO:0006511">
    <property type="term" value="P:ubiquitin-dependent protein catabolic process"/>
    <property type="evidence" value="ECO:0000318"/>
    <property type="project" value="GO_Central"/>
</dbReference>
<dbReference type="Gene3D" id="1.25.40.10">
    <property type="entry name" value="Tetratricopeptide repeat domain"/>
    <property type="match status" value="1"/>
</dbReference>
<dbReference type="InterPro" id="IPR013586">
    <property type="entry name" value="26S_Psome_reg_C"/>
</dbReference>
<dbReference type="InterPro" id="IPR050756">
    <property type="entry name" value="CSN3"/>
</dbReference>
<dbReference type="InterPro" id="IPR000717">
    <property type="entry name" value="PCI_dom"/>
</dbReference>
<dbReference type="InterPro" id="IPR011990">
    <property type="entry name" value="TPR-like_helical_dom_sf"/>
</dbReference>
<dbReference type="PANTHER" id="PTHR10758:SF2">
    <property type="entry name" value="26S PROTEASOME NON-ATPASE REGULATORY SUBUNIT 3"/>
    <property type="match status" value="1"/>
</dbReference>
<dbReference type="PANTHER" id="PTHR10758">
    <property type="entry name" value="26S PROTEASOME NON-ATPASE REGULATORY SUBUNIT 3/COP9 SIGNALOSOME COMPLEX SUBUNIT 3"/>
    <property type="match status" value="1"/>
</dbReference>
<dbReference type="Pfam" id="PF01399">
    <property type="entry name" value="PCI"/>
    <property type="match status" value="1"/>
</dbReference>
<dbReference type="Pfam" id="PF08375">
    <property type="entry name" value="Rpn3_C"/>
    <property type="match status" value="1"/>
</dbReference>
<dbReference type="SMART" id="SM00753">
    <property type="entry name" value="PAM"/>
    <property type="match status" value="1"/>
</dbReference>
<dbReference type="SMART" id="SM00088">
    <property type="entry name" value="PINT"/>
    <property type="match status" value="1"/>
</dbReference>
<dbReference type="SUPFAM" id="SSF48452">
    <property type="entry name" value="TPR-like"/>
    <property type="match status" value="1"/>
</dbReference>
<dbReference type="PROSITE" id="PS50250">
    <property type="entry name" value="PCI"/>
    <property type="match status" value="1"/>
</dbReference>
<name>PSMD3_DICDI</name>
<feature type="chain" id="PRO_0000327455" description="26S proteasome non-ATPase regulatory subunit 3">
    <location>
        <begin position="1"/>
        <end position="504"/>
    </location>
</feature>
<feature type="domain" description="PCI" evidence="2">
    <location>
        <begin position="254"/>
        <end position="434"/>
    </location>
</feature>
<feature type="region of interest" description="Disordered" evidence="3">
    <location>
        <begin position="485"/>
        <end position="504"/>
    </location>
</feature>
<feature type="compositionally biased region" description="Acidic residues" evidence="3">
    <location>
        <begin position="494"/>
        <end position="504"/>
    </location>
</feature>
<evidence type="ECO:0000250" key="1"/>
<evidence type="ECO:0000255" key="2">
    <source>
        <dbReference type="PROSITE-ProRule" id="PRU01185"/>
    </source>
</evidence>
<evidence type="ECO:0000256" key="3">
    <source>
        <dbReference type="SAM" id="MobiDB-lite"/>
    </source>
</evidence>
<evidence type="ECO:0000305" key="4"/>
<reference key="1">
    <citation type="journal article" date="2005" name="Nature">
        <title>The genome of the social amoeba Dictyostelium discoideum.</title>
        <authorList>
            <person name="Eichinger L."/>
            <person name="Pachebat J.A."/>
            <person name="Gloeckner G."/>
            <person name="Rajandream M.A."/>
            <person name="Sucgang R."/>
            <person name="Berriman M."/>
            <person name="Song J."/>
            <person name="Olsen R."/>
            <person name="Szafranski K."/>
            <person name="Xu Q."/>
            <person name="Tunggal B."/>
            <person name="Kummerfeld S."/>
            <person name="Madera M."/>
            <person name="Konfortov B.A."/>
            <person name="Rivero F."/>
            <person name="Bankier A.T."/>
            <person name="Lehmann R."/>
            <person name="Hamlin N."/>
            <person name="Davies R."/>
            <person name="Gaudet P."/>
            <person name="Fey P."/>
            <person name="Pilcher K."/>
            <person name="Chen G."/>
            <person name="Saunders D."/>
            <person name="Sodergren E.J."/>
            <person name="Davis P."/>
            <person name="Kerhornou A."/>
            <person name="Nie X."/>
            <person name="Hall N."/>
            <person name="Anjard C."/>
            <person name="Hemphill L."/>
            <person name="Bason N."/>
            <person name="Farbrother P."/>
            <person name="Desany B."/>
            <person name="Just E."/>
            <person name="Morio T."/>
            <person name="Rost R."/>
            <person name="Churcher C.M."/>
            <person name="Cooper J."/>
            <person name="Haydock S."/>
            <person name="van Driessche N."/>
            <person name="Cronin A."/>
            <person name="Goodhead I."/>
            <person name="Muzny D.M."/>
            <person name="Mourier T."/>
            <person name="Pain A."/>
            <person name="Lu M."/>
            <person name="Harper D."/>
            <person name="Lindsay R."/>
            <person name="Hauser H."/>
            <person name="James K.D."/>
            <person name="Quiles M."/>
            <person name="Madan Babu M."/>
            <person name="Saito T."/>
            <person name="Buchrieser C."/>
            <person name="Wardroper A."/>
            <person name="Felder M."/>
            <person name="Thangavelu M."/>
            <person name="Johnson D."/>
            <person name="Knights A."/>
            <person name="Loulseged H."/>
            <person name="Mungall K.L."/>
            <person name="Oliver K."/>
            <person name="Price C."/>
            <person name="Quail M.A."/>
            <person name="Urushihara H."/>
            <person name="Hernandez J."/>
            <person name="Rabbinowitsch E."/>
            <person name="Steffen D."/>
            <person name="Sanders M."/>
            <person name="Ma J."/>
            <person name="Kohara Y."/>
            <person name="Sharp S."/>
            <person name="Simmonds M.N."/>
            <person name="Spiegler S."/>
            <person name="Tivey A."/>
            <person name="Sugano S."/>
            <person name="White B."/>
            <person name="Walker D."/>
            <person name="Woodward J.R."/>
            <person name="Winckler T."/>
            <person name="Tanaka Y."/>
            <person name="Shaulsky G."/>
            <person name="Schleicher M."/>
            <person name="Weinstock G.M."/>
            <person name="Rosenthal A."/>
            <person name="Cox E.C."/>
            <person name="Chisholm R.L."/>
            <person name="Gibbs R.A."/>
            <person name="Loomis W.F."/>
            <person name="Platzer M."/>
            <person name="Kay R.R."/>
            <person name="Williams J.G."/>
            <person name="Dear P.H."/>
            <person name="Noegel A.A."/>
            <person name="Barrell B.G."/>
            <person name="Kuspa A."/>
        </authorList>
    </citation>
    <scope>NUCLEOTIDE SEQUENCE [LARGE SCALE GENOMIC DNA]</scope>
    <source>
        <strain>AX4</strain>
    </source>
</reference>
<reference key="2">
    <citation type="journal article" date="2006" name="J. Proteome Res.">
        <title>Identification of novel centrosomal proteins in Dictyostelium discoideum by comparative proteomic approaches.</title>
        <authorList>
            <person name="Reinders Y."/>
            <person name="Schulz I."/>
            <person name="Graef R."/>
            <person name="Sickmann A."/>
        </authorList>
    </citation>
    <scope>IDENTIFICATION BY MASS SPECTROMETRY [LARGE SCALE ANALYSIS]</scope>
</reference>
<accession>Q1ZXD3</accession>
<organism>
    <name type="scientific">Dictyostelium discoideum</name>
    <name type="common">Social amoeba</name>
    <dbReference type="NCBI Taxonomy" id="44689"/>
    <lineage>
        <taxon>Eukaryota</taxon>
        <taxon>Amoebozoa</taxon>
        <taxon>Evosea</taxon>
        <taxon>Eumycetozoa</taxon>
        <taxon>Dictyostelia</taxon>
        <taxon>Dictyosteliales</taxon>
        <taxon>Dictyosteliaceae</taxon>
        <taxon>Dictyostelium</taxon>
    </lineage>
</organism>
<gene>
    <name type="primary">psmD3</name>
    <name type="ORF">DDB_G0288621</name>
</gene>
<comment type="function">
    <text evidence="1">Acts as a regulatory subunit of the 26 proteasome which is involved in the ATP-dependent degradation of ubiquitinated proteins.</text>
</comment>
<comment type="subunit">
    <text evidence="1">The 26S proteasome is composed of a core protease, known as the 20S proteasome, capped at one or both ends by the 19S regulatory complex (RC). The RC is composed of at least 18 different subunits in two subcomplexes, the base and the lid, which form the portions proximal and distal to the 20S proteolytic core, respectively (By similarity).</text>
</comment>
<comment type="similarity">
    <text evidence="4">Belongs to the proteasome subunit S3 family.</text>
</comment>
<protein>
    <recommendedName>
        <fullName>26S proteasome non-ATPase regulatory subunit 3</fullName>
    </recommendedName>
    <alternativeName>
        <fullName>26S proteasome regulatory subunit RPN3</fullName>
    </alternativeName>
</protein>